<feature type="chain" id="PRO_0000154122" description="Anthranilate synthase component 1 1">
    <location>
        <begin position="1"/>
        <end position="489"/>
    </location>
</feature>
<feature type="region of interest" description="Disordered" evidence="3">
    <location>
        <begin position="288"/>
        <end position="309"/>
    </location>
</feature>
<feature type="compositionally biased region" description="Basic and acidic residues" evidence="3">
    <location>
        <begin position="300"/>
        <end position="309"/>
    </location>
</feature>
<feature type="binding site" evidence="2">
    <location>
        <begin position="262"/>
        <end position="264"/>
    </location>
    <ligand>
        <name>L-tryptophan</name>
        <dbReference type="ChEBI" id="CHEBI:57912"/>
    </ligand>
</feature>
<feature type="binding site" evidence="2">
    <location>
        <begin position="297"/>
        <end position="298"/>
    </location>
    <ligand>
        <name>chorismate</name>
        <dbReference type="ChEBI" id="CHEBI:29748"/>
    </ligand>
</feature>
<feature type="binding site" evidence="2">
    <location>
        <position position="324"/>
    </location>
    <ligand>
        <name>Mg(2+)</name>
        <dbReference type="ChEBI" id="CHEBI:18420"/>
    </ligand>
</feature>
<feature type="binding site" evidence="2">
    <location>
        <position position="412"/>
    </location>
    <ligand>
        <name>chorismate</name>
        <dbReference type="ChEBI" id="CHEBI:29748"/>
    </ligand>
</feature>
<feature type="binding site" evidence="2">
    <location>
        <position position="432"/>
    </location>
    <ligand>
        <name>chorismate</name>
        <dbReference type="ChEBI" id="CHEBI:29748"/>
    </ligand>
</feature>
<feature type="binding site" evidence="2">
    <location>
        <begin position="446"/>
        <end position="448"/>
    </location>
    <ligand>
        <name>chorismate</name>
        <dbReference type="ChEBI" id="CHEBI:29748"/>
    </ligand>
</feature>
<feature type="binding site" evidence="2">
    <location>
        <position position="448"/>
    </location>
    <ligand>
        <name>chorismate</name>
        <dbReference type="ChEBI" id="CHEBI:29748"/>
    </ligand>
</feature>
<feature type="binding site" evidence="2">
    <location>
        <position position="461"/>
    </location>
    <ligand>
        <name>Mg(2+)</name>
        <dbReference type="ChEBI" id="CHEBI:18420"/>
    </ligand>
</feature>
<sequence length="489" mass="53790">MQSVETDRTTFTDLAADAHPAARVPVEVRVDVDDPFLAYRRARDETGGVYLATTGGQSGWGYFGTAPADFREVDPRAGGTLAALTEFLDGERLVRGDCDVPYPCGAVGWLSYDVARELESLPDSADADRALPNLQVARYDRFAAWEEPRGESVTLRVTACPRVDDFETPELAYEFGKQHALDLARAAAQGDPSVEDPPVETDEATFESDCTRESFADRVQTVKQYIRDGDTFQANVSQRLRAPAAVHPVEAFDALRTVNPAPYSALLEFPGVDLVSASPELLLHRDGDRIETEPIAGTRPRGETPDADDRLETDLLDDEKERAEHAMLVDLERNDLGKVSKFGSVEVSDYRRVDRYSEVMHLVSVVEGRLRDGASLQDAIAAVFPGGTITGAPKPRTMEIIDEVEATRRGPYTGSIGLFGFDGRATLNIVIRTLVRYAEEYHLRVGAGVVHDSDPDREYQETLDKGRALVNAVDEALGRRVDLAMEDQQ</sequence>
<organism>
    <name type="scientific">Haloarcula marismortui (strain ATCC 43049 / DSM 3752 / JCM 8966 / VKM B-1809)</name>
    <name type="common">Halobacterium marismortui</name>
    <dbReference type="NCBI Taxonomy" id="272569"/>
    <lineage>
        <taxon>Archaea</taxon>
        <taxon>Methanobacteriati</taxon>
        <taxon>Methanobacteriota</taxon>
        <taxon>Stenosarchaea group</taxon>
        <taxon>Halobacteria</taxon>
        <taxon>Halobacteriales</taxon>
        <taxon>Haloarculaceae</taxon>
        <taxon>Haloarcula</taxon>
    </lineage>
</organism>
<gene>
    <name type="primary">trpE1</name>
    <name type="ordered locus">rrnAC0709</name>
</gene>
<name>TRPE1_HALMA</name>
<comment type="catalytic activity">
    <reaction>
        <text>chorismate + L-glutamine = anthranilate + pyruvate + L-glutamate + H(+)</text>
        <dbReference type="Rhea" id="RHEA:21732"/>
        <dbReference type="ChEBI" id="CHEBI:15361"/>
        <dbReference type="ChEBI" id="CHEBI:15378"/>
        <dbReference type="ChEBI" id="CHEBI:16567"/>
        <dbReference type="ChEBI" id="CHEBI:29748"/>
        <dbReference type="ChEBI" id="CHEBI:29985"/>
        <dbReference type="ChEBI" id="CHEBI:58359"/>
        <dbReference type="EC" id="4.1.3.27"/>
    </reaction>
</comment>
<comment type="cofactor">
    <cofactor evidence="2">
        <name>Mg(2+)</name>
        <dbReference type="ChEBI" id="CHEBI:18420"/>
    </cofactor>
    <text evidence="2">Binds 1 Mg(2+) ion per subunit.</text>
</comment>
<comment type="pathway">
    <text>Amino-acid biosynthesis; L-tryptophan biosynthesis; L-tryptophan from chorismate: step 1/5.</text>
</comment>
<comment type="subunit">
    <text evidence="1">Tetramer of two components I and two components II.</text>
</comment>
<comment type="miscellaneous">
    <text>Component I catalyzes the formation of anthranilate using ammonia rather than glutamine, whereas component II provides glutamine amidotransferase activity.</text>
</comment>
<comment type="similarity">
    <text evidence="4">Belongs to the anthranilate synthase component I family.</text>
</comment>
<keyword id="KW-0028">Amino-acid biosynthesis</keyword>
<keyword id="KW-0057">Aromatic amino acid biosynthesis</keyword>
<keyword id="KW-0456">Lyase</keyword>
<keyword id="KW-0460">Magnesium</keyword>
<keyword id="KW-0479">Metal-binding</keyword>
<keyword id="KW-1185">Reference proteome</keyword>
<keyword id="KW-0822">Tryptophan biosynthesis</keyword>
<reference key="1">
    <citation type="journal article" date="2004" name="Genome Res.">
        <title>Genome sequence of Haloarcula marismortui: a halophilic archaeon from the Dead Sea.</title>
        <authorList>
            <person name="Baliga N.S."/>
            <person name="Bonneau R."/>
            <person name="Facciotti M.T."/>
            <person name="Pan M."/>
            <person name="Glusman G."/>
            <person name="Deutsch E.W."/>
            <person name="Shannon P."/>
            <person name="Chiu Y."/>
            <person name="Weng R.S."/>
            <person name="Gan R.R."/>
            <person name="Hung P."/>
            <person name="Date S.V."/>
            <person name="Marcotte E."/>
            <person name="Hood L."/>
            <person name="Ng W.V."/>
        </authorList>
    </citation>
    <scope>NUCLEOTIDE SEQUENCE [LARGE SCALE GENOMIC DNA]</scope>
    <source>
        <strain>ATCC 43049 / DSM 3752 / JCM 8966 / VKM B-1809</strain>
    </source>
</reference>
<evidence type="ECO:0000250" key="1"/>
<evidence type="ECO:0000250" key="2">
    <source>
        <dbReference type="UniProtKB" id="P00897"/>
    </source>
</evidence>
<evidence type="ECO:0000256" key="3">
    <source>
        <dbReference type="SAM" id="MobiDB-lite"/>
    </source>
</evidence>
<evidence type="ECO:0000305" key="4"/>
<accession>Q5V448</accession>
<proteinExistence type="inferred from homology"/>
<protein>
    <recommendedName>
        <fullName>Anthranilate synthase component 1 1</fullName>
        <ecNumber>4.1.3.27</ecNumber>
    </recommendedName>
    <alternativeName>
        <fullName>Anthranilate synthase component I 1</fullName>
    </alternativeName>
</protein>
<dbReference type="EC" id="4.1.3.27"/>
<dbReference type="EMBL" id="AY596297">
    <property type="protein sequence ID" value="AAV45704.1"/>
    <property type="molecule type" value="Genomic_DNA"/>
</dbReference>
<dbReference type="RefSeq" id="WP_011223185.1">
    <property type="nucleotide sequence ID" value="NC_006396.1"/>
</dbReference>
<dbReference type="SMR" id="Q5V448"/>
<dbReference type="STRING" id="272569.rrnAC0709"/>
<dbReference type="PaxDb" id="272569-rrnAC0709"/>
<dbReference type="EnsemblBacteria" id="AAV45704">
    <property type="protein sequence ID" value="AAV45704"/>
    <property type="gene ID" value="rrnAC0709"/>
</dbReference>
<dbReference type="GeneID" id="40151744"/>
<dbReference type="KEGG" id="hma:rrnAC0709"/>
<dbReference type="PATRIC" id="fig|272569.17.peg.1454"/>
<dbReference type="eggNOG" id="arCOG02014">
    <property type="taxonomic scope" value="Archaea"/>
</dbReference>
<dbReference type="HOGENOM" id="CLU_006493_9_3_2"/>
<dbReference type="UniPathway" id="UPA00035">
    <property type="reaction ID" value="UER00040"/>
</dbReference>
<dbReference type="Proteomes" id="UP000001169">
    <property type="component" value="Chromosome I"/>
</dbReference>
<dbReference type="GO" id="GO:0004049">
    <property type="term" value="F:anthranilate synthase activity"/>
    <property type="evidence" value="ECO:0007669"/>
    <property type="project" value="UniProtKB-EC"/>
</dbReference>
<dbReference type="GO" id="GO:0046872">
    <property type="term" value="F:metal ion binding"/>
    <property type="evidence" value="ECO:0007669"/>
    <property type="project" value="UniProtKB-KW"/>
</dbReference>
<dbReference type="GO" id="GO:0000162">
    <property type="term" value="P:L-tryptophan biosynthetic process"/>
    <property type="evidence" value="ECO:0007669"/>
    <property type="project" value="UniProtKB-UniPathway"/>
</dbReference>
<dbReference type="Gene3D" id="3.60.120.10">
    <property type="entry name" value="Anthranilate synthase"/>
    <property type="match status" value="1"/>
</dbReference>
<dbReference type="InterPro" id="IPR005801">
    <property type="entry name" value="ADC_synthase"/>
</dbReference>
<dbReference type="InterPro" id="IPR019999">
    <property type="entry name" value="Anth_synth_I-like"/>
</dbReference>
<dbReference type="InterPro" id="IPR006805">
    <property type="entry name" value="Anth_synth_I_N"/>
</dbReference>
<dbReference type="InterPro" id="IPR015890">
    <property type="entry name" value="Chorismate_C"/>
</dbReference>
<dbReference type="InterPro" id="IPR010118">
    <property type="entry name" value="Para-NH2Bz/anthranilate_synth"/>
</dbReference>
<dbReference type="NCBIfam" id="TIGR01824">
    <property type="entry name" value="PabB-clade2"/>
    <property type="match status" value="1"/>
</dbReference>
<dbReference type="PANTHER" id="PTHR11236">
    <property type="entry name" value="AMINOBENZOATE/ANTHRANILATE SYNTHASE"/>
    <property type="match status" value="1"/>
</dbReference>
<dbReference type="PANTHER" id="PTHR11236:SF9">
    <property type="entry name" value="ANTHRANILATE SYNTHASE COMPONENT 1"/>
    <property type="match status" value="1"/>
</dbReference>
<dbReference type="Pfam" id="PF04715">
    <property type="entry name" value="Anth_synt_I_N"/>
    <property type="match status" value="1"/>
</dbReference>
<dbReference type="Pfam" id="PF00425">
    <property type="entry name" value="Chorismate_bind"/>
    <property type="match status" value="1"/>
</dbReference>
<dbReference type="PRINTS" id="PR00095">
    <property type="entry name" value="ANTSNTHASEI"/>
</dbReference>
<dbReference type="SUPFAM" id="SSF56322">
    <property type="entry name" value="ADC synthase"/>
    <property type="match status" value="1"/>
</dbReference>